<proteinExistence type="inferred from homology"/>
<comment type="function">
    <text evidence="1">Catalyzes the initial step of the lipid cycle reactions in the biosynthesis of the cell wall peptidoglycan: transfers peptidoglycan precursor phospho-MurNAc-pentapeptide from UDP-MurNAc-pentapeptide onto the lipid carrier undecaprenyl phosphate, yielding undecaprenyl-pyrophosphoryl-MurNAc-pentapeptide, known as lipid I.</text>
</comment>
<comment type="catalytic activity">
    <reaction evidence="1">
        <text>UDP-N-acetyl-alpha-D-muramoyl-L-alanyl-gamma-D-glutamyl-L-lysyl-D-alanyl-D-alanine + di-trans,octa-cis-undecaprenyl phosphate = Mur2Ac(oyl-L-Ala-gamma-D-Glu-L-Lys-D-Ala-D-Ala)-di-trans,octa-cis-undecaprenyl diphosphate + UMP</text>
        <dbReference type="Rhea" id="RHEA:21920"/>
        <dbReference type="ChEBI" id="CHEBI:57865"/>
        <dbReference type="ChEBI" id="CHEBI:60032"/>
        <dbReference type="ChEBI" id="CHEBI:60392"/>
        <dbReference type="ChEBI" id="CHEBI:70758"/>
        <dbReference type="EC" id="2.7.8.13"/>
    </reaction>
</comment>
<comment type="cofactor">
    <cofactor evidence="1">
        <name>Mg(2+)</name>
        <dbReference type="ChEBI" id="CHEBI:18420"/>
    </cofactor>
</comment>
<comment type="pathway">
    <text evidence="1">Cell wall biogenesis; peptidoglycan biosynthesis.</text>
</comment>
<comment type="subcellular location">
    <subcellularLocation>
        <location evidence="1">Cell membrane</location>
        <topology evidence="1">Multi-pass membrane protein</topology>
    </subcellularLocation>
</comment>
<comment type="similarity">
    <text evidence="1">Belongs to the glycosyltransferase 4 family. MraY subfamily.</text>
</comment>
<sequence length="319" mass="34928">MQASLIAFMISLVLSALLFPWLIIWMRSHDEGQQIRDEGPKWHEKKSGTPTMGGTVFVLSAAVATVAICAYKGQLSKTVWILLVALLGYGIIGFLDDGLKLFFKRNLGLRAWQKMDLQLLVAAGIVLLAASDNFDFALYLPFAGVVKNVVLFTLFEVFWLVGFSNAVNLSDGLDGLATGLSFIAYGTYAWLAFKSQNFGVLVFCMAVMGGLAAFFMFNHKPAKIFMGDAGSLALGGGLAAVSIFLGRPWSLLLVGIVFVCETASVILQVASFKTTGKRIFKMTPIHHHFEMLGWSEWKVDLVFWLVGLVGSGIYLMIWG</sequence>
<dbReference type="EC" id="2.7.8.13" evidence="1"/>
<dbReference type="EMBL" id="CP000412">
    <property type="protein sequence ID" value="ABJ58298.1"/>
    <property type="molecule type" value="Genomic_DNA"/>
</dbReference>
<dbReference type="RefSeq" id="WP_003619167.1">
    <property type="nucleotide sequence ID" value="NC_008529.1"/>
</dbReference>
<dbReference type="SMR" id="Q04B74"/>
<dbReference type="KEGG" id="lbu:LBUL_0672"/>
<dbReference type="HOGENOM" id="CLU_023982_0_1_9"/>
<dbReference type="BioCyc" id="LDEL321956:LBUL_RS03205-MONOMER"/>
<dbReference type="UniPathway" id="UPA00219"/>
<dbReference type="GO" id="GO:0005886">
    <property type="term" value="C:plasma membrane"/>
    <property type="evidence" value="ECO:0007669"/>
    <property type="project" value="UniProtKB-SubCell"/>
</dbReference>
<dbReference type="GO" id="GO:0046872">
    <property type="term" value="F:metal ion binding"/>
    <property type="evidence" value="ECO:0007669"/>
    <property type="project" value="UniProtKB-KW"/>
</dbReference>
<dbReference type="GO" id="GO:0008963">
    <property type="term" value="F:phospho-N-acetylmuramoyl-pentapeptide-transferase activity"/>
    <property type="evidence" value="ECO:0007669"/>
    <property type="project" value="UniProtKB-UniRule"/>
</dbReference>
<dbReference type="GO" id="GO:0051301">
    <property type="term" value="P:cell division"/>
    <property type="evidence" value="ECO:0007669"/>
    <property type="project" value="UniProtKB-KW"/>
</dbReference>
<dbReference type="GO" id="GO:0071555">
    <property type="term" value="P:cell wall organization"/>
    <property type="evidence" value="ECO:0007669"/>
    <property type="project" value="UniProtKB-KW"/>
</dbReference>
<dbReference type="GO" id="GO:0009252">
    <property type="term" value="P:peptidoglycan biosynthetic process"/>
    <property type="evidence" value="ECO:0007669"/>
    <property type="project" value="UniProtKB-UniRule"/>
</dbReference>
<dbReference type="GO" id="GO:0008360">
    <property type="term" value="P:regulation of cell shape"/>
    <property type="evidence" value="ECO:0007669"/>
    <property type="project" value="UniProtKB-KW"/>
</dbReference>
<dbReference type="CDD" id="cd06852">
    <property type="entry name" value="GT_MraY"/>
    <property type="match status" value="1"/>
</dbReference>
<dbReference type="HAMAP" id="MF_00038">
    <property type="entry name" value="MraY"/>
    <property type="match status" value="1"/>
</dbReference>
<dbReference type="InterPro" id="IPR000715">
    <property type="entry name" value="Glycosyl_transferase_4"/>
</dbReference>
<dbReference type="InterPro" id="IPR003524">
    <property type="entry name" value="PNAcMuramoyl-5peptid_Trfase"/>
</dbReference>
<dbReference type="InterPro" id="IPR018480">
    <property type="entry name" value="PNAcMuramoyl-5peptid_Trfase_CS"/>
</dbReference>
<dbReference type="NCBIfam" id="TIGR00445">
    <property type="entry name" value="mraY"/>
    <property type="match status" value="1"/>
</dbReference>
<dbReference type="PANTHER" id="PTHR22926">
    <property type="entry name" value="PHOSPHO-N-ACETYLMURAMOYL-PENTAPEPTIDE-TRANSFERASE"/>
    <property type="match status" value="1"/>
</dbReference>
<dbReference type="PANTHER" id="PTHR22926:SF5">
    <property type="entry name" value="PHOSPHO-N-ACETYLMURAMOYL-PENTAPEPTIDE-TRANSFERASE HOMOLOG"/>
    <property type="match status" value="1"/>
</dbReference>
<dbReference type="Pfam" id="PF00953">
    <property type="entry name" value="Glycos_transf_4"/>
    <property type="match status" value="1"/>
</dbReference>
<dbReference type="Pfam" id="PF10555">
    <property type="entry name" value="MraY_sig1"/>
    <property type="match status" value="1"/>
</dbReference>
<dbReference type="PROSITE" id="PS01348">
    <property type="entry name" value="MRAY_2"/>
    <property type="match status" value="1"/>
</dbReference>
<organism>
    <name type="scientific">Lactobacillus delbrueckii subsp. bulgaricus (strain ATCC BAA-365 / Lb-18)</name>
    <dbReference type="NCBI Taxonomy" id="321956"/>
    <lineage>
        <taxon>Bacteria</taxon>
        <taxon>Bacillati</taxon>
        <taxon>Bacillota</taxon>
        <taxon>Bacilli</taxon>
        <taxon>Lactobacillales</taxon>
        <taxon>Lactobacillaceae</taxon>
        <taxon>Lactobacillus</taxon>
    </lineage>
</organism>
<reference key="1">
    <citation type="journal article" date="2006" name="Proc. Natl. Acad. Sci. U.S.A.">
        <title>Comparative genomics of the lactic acid bacteria.</title>
        <authorList>
            <person name="Makarova K.S."/>
            <person name="Slesarev A."/>
            <person name="Wolf Y.I."/>
            <person name="Sorokin A."/>
            <person name="Mirkin B."/>
            <person name="Koonin E.V."/>
            <person name="Pavlov A."/>
            <person name="Pavlova N."/>
            <person name="Karamychev V."/>
            <person name="Polouchine N."/>
            <person name="Shakhova V."/>
            <person name="Grigoriev I."/>
            <person name="Lou Y."/>
            <person name="Rohksar D."/>
            <person name="Lucas S."/>
            <person name="Huang K."/>
            <person name="Goodstein D.M."/>
            <person name="Hawkins T."/>
            <person name="Plengvidhya V."/>
            <person name="Welker D."/>
            <person name="Hughes J."/>
            <person name="Goh Y."/>
            <person name="Benson A."/>
            <person name="Baldwin K."/>
            <person name="Lee J.-H."/>
            <person name="Diaz-Muniz I."/>
            <person name="Dosti B."/>
            <person name="Smeianov V."/>
            <person name="Wechter W."/>
            <person name="Barabote R."/>
            <person name="Lorca G."/>
            <person name="Altermann E."/>
            <person name="Barrangou R."/>
            <person name="Ganesan B."/>
            <person name="Xie Y."/>
            <person name="Rawsthorne H."/>
            <person name="Tamir D."/>
            <person name="Parker C."/>
            <person name="Breidt F."/>
            <person name="Broadbent J.R."/>
            <person name="Hutkins R."/>
            <person name="O'Sullivan D."/>
            <person name="Steele J."/>
            <person name="Unlu G."/>
            <person name="Saier M.H. Jr."/>
            <person name="Klaenhammer T."/>
            <person name="Richardson P."/>
            <person name="Kozyavkin S."/>
            <person name="Weimer B.C."/>
            <person name="Mills D.A."/>
        </authorList>
    </citation>
    <scope>NUCLEOTIDE SEQUENCE [LARGE SCALE GENOMIC DNA]</scope>
    <source>
        <strain>ATCC BAA-365 / Lb-18</strain>
    </source>
</reference>
<keyword id="KW-0131">Cell cycle</keyword>
<keyword id="KW-0132">Cell division</keyword>
<keyword id="KW-1003">Cell membrane</keyword>
<keyword id="KW-0133">Cell shape</keyword>
<keyword id="KW-0961">Cell wall biogenesis/degradation</keyword>
<keyword id="KW-0460">Magnesium</keyword>
<keyword id="KW-0472">Membrane</keyword>
<keyword id="KW-0479">Metal-binding</keyword>
<keyword id="KW-0573">Peptidoglycan synthesis</keyword>
<keyword id="KW-0808">Transferase</keyword>
<keyword id="KW-0812">Transmembrane</keyword>
<keyword id="KW-1133">Transmembrane helix</keyword>
<name>MRAY_LACDB</name>
<feature type="chain" id="PRO_1000057279" description="Phospho-N-acetylmuramoyl-pentapeptide-transferase">
    <location>
        <begin position="1"/>
        <end position="319"/>
    </location>
</feature>
<feature type="transmembrane region" description="Helical" evidence="1">
    <location>
        <begin position="5"/>
        <end position="25"/>
    </location>
</feature>
<feature type="transmembrane region" description="Helical" evidence="1">
    <location>
        <begin position="51"/>
        <end position="71"/>
    </location>
</feature>
<feature type="transmembrane region" description="Helical" evidence="1">
    <location>
        <begin position="79"/>
        <end position="99"/>
    </location>
</feature>
<feature type="transmembrane region" description="Helical" evidence="1">
    <location>
        <begin position="119"/>
        <end position="139"/>
    </location>
</feature>
<feature type="transmembrane region" description="Helical" evidence="1">
    <location>
        <begin position="149"/>
        <end position="169"/>
    </location>
</feature>
<feature type="transmembrane region" description="Helical" evidence="1">
    <location>
        <begin position="173"/>
        <end position="193"/>
    </location>
</feature>
<feature type="transmembrane region" description="Helical" evidence="1">
    <location>
        <begin position="197"/>
        <end position="217"/>
    </location>
</feature>
<feature type="transmembrane region" description="Helical" evidence="1">
    <location>
        <begin position="224"/>
        <end position="246"/>
    </location>
</feature>
<feature type="transmembrane region" description="Helical" evidence="1">
    <location>
        <begin position="299"/>
        <end position="319"/>
    </location>
</feature>
<accession>Q04B74</accession>
<gene>
    <name evidence="1" type="primary">mraY</name>
    <name type="ordered locus">LBUL_0672</name>
</gene>
<protein>
    <recommendedName>
        <fullName evidence="1">Phospho-N-acetylmuramoyl-pentapeptide-transferase</fullName>
        <ecNumber evidence="1">2.7.8.13</ecNumber>
    </recommendedName>
    <alternativeName>
        <fullName evidence="1">UDP-MurNAc-pentapeptide phosphotransferase</fullName>
    </alternativeName>
</protein>
<evidence type="ECO:0000255" key="1">
    <source>
        <dbReference type="HAMAP-Rule" id="MF_00038"/>
    </source>
</evidence>